<evidence type="ECO:0000250" key="1"/>
<evidence type="ECO:0000255" key="2"/>
<evidence type="ECO:0000269" key="3">
    <source>
    </source>
</evidence>
<evidence type="ECO:0000305" key="4"/>
<dbReference type="EMBL" id="AC007202">
    <property type="protein sequence ID" value="AAD30236.1"/>
    <property type="molecule type" value="Genomic_DNA"/>
</dbReference>
<dbReference type="EMBL" id="CP002684">
    <property type="protein sequence ID" value="AEE36238.1"/>
    <property type="molecule type" value="Genomic_DNA"/>
</dbReference>
<dbReference type="PIR" id="A96825">
    <property type="entry name" value="A96825"/>
</dbReference>
<dbReference type="RefSeq" id="NP_178058.1">
    <property type="nucleotide sequence ID" value="NM_106588.1"/>
</dbReference>
<dbReference type="SMR" id="Q9SAK8"/>
<dbReference type="STRING" id="3702.Q9SAK8"/>
<dbReference type="iPTMnet" id="Q9SAK8"/>
<dbReference type="PaxDb" id="3702-AT1G79400.1"/>
<dbReference type="ProteomicsDB" id="246843"/>
<dbReference type="EnsemblPlants" id="AT1G79400.1">
    <property type="protein sequence ID" value="AT1G79400.1"/>
    <property type="gene ID" value="AT1G79400"/>
</dbReference>
<dbReference type="GeneID" id="844278"/>
<dbReference type="Gramene" id="AT1G79400.1">
    <property type="protein sequence ID" value="AT1G79400.1"/>
    <property type="gene ID" value="AT1G79400"/>
</dbReference>
<dbReference type="KEGG" id="ath:AT1G79400"/>
<dbReference type="Araport" id="AT1G79400"/>
<dbReference type="TAIR" id="AT1G79400">
    <property type="gene designation" value="CHX2"/>
</dbReference>
<dbReference type="eggNOG" id="KOG1650">
    <property type="taxonomic scope" value="Eukaryota"/>
</dbReference>
<dbReference type="HOGENOM" id="CLU_005126_6_2_1"/>
<dbReference type="InParanoid" id="Q9SAK8"/>
<dbReference type="OMA" id="HHRMRRW"/>
<dbReference type="PhylomeDB" id="Q9SAK8"/>
<dbReference type="PRO" id="PR:Q9SAK8"/>
<dbReference type="Proteomes" id="UP000006548">
    <property type="component" value="Chromosome 1"/>
</dbReference>
<dbReference type="ExpressionAtlas" id="Q9SAK8">
    <property type="expression patterns" value="baseline and differential"/>
</dbReference>
<dbReference type="GO" id="GO:0016020">
    <property type="term" value="C:membrane"/>
    <property type="evidence" value="ECO:0007669"/>
    <property type="project" value="UniProtKB-SubCell"/>
</dbReference>
<dbReference type="GO" id="GO:0015297">
    <property type="term" value="F:antiporter activity"/>
    <property type="evidence" value="ECO:0007669"/>
    <property type="project" value="UniProtKB-KW"/>
</dbReference>
<dbReference type="GO" id="GO:0006813">
    <property type="term" value="P:potassium ion transport"/>
    <property type="evidence" value="ECO:0007669"/>
    <property type="project" value="UniProtKB-KW"/>
</dbReference>
<dbReference type="GO" id="GO:1902600">
    <property type="term" value="P:proton transmembrane transport"/>
    <property type="evidence" value="ECO:0007669"/>
    <property type="project" value="InterPro"/>
</dbReference>
<dbReference type="FunFam" id="1.20.1530.20:FF:000019">
    <property type="entry name" value="Cation/H(+) antiporter 1"/>
    <property type="match status" value="1"/>
</dbReference>
<dbReference type="Gene3D" id="1.20.1530.20">
    <property type="match status" value="1"/>
</dbReference>
<dbReference type="InterPro" id="IPR006153">
    <property type="entry name" value="Cation/H_exchanger_TM"/>
</dbReference>
<dbReference type="InterPro" id="IPR050794">
    <property type="entry name" value="CPA2_transporter"/>
</dbReference>
<dbReference type="InterPro" id="IPR038770">
    <property type="entry name" value="Na+/solute_symporter_sf"/>
</dbReference>
<dbReference type="PANTHER" id="PTHR32468">
    <property type="entry name" value="CATION/H + ANTIPORTER"/>
    <property type="match status" value="1"/>
</dbReference>
<dbReference type="PANTHER" id="PTHR32468:SF71">
    <property type="entry name" value="CATION_H(+) ANTIPORTER 2"/>
    <property type="match status" value="1"/>
</dbReference>
<dbReference type="Pfam" id="PF23256">
    <property type="entry name" value="CHX17_2nd"/>
    <property type="match status" value="1"/>
</dbReference>
<dbReference type="Pfam" id="PF23259">
    <property type="entry name" value="CHX17_C"/>
    <property type="match status" value="1"/>
</dbReference>
<dbReference type="Pfam" id="PF00999">
    <property type="entry name" value="Na_H_Exchanger"/>
    <property type="match status" value="1"/>
</dbReference>
<gene>
    <name type="primary">CHX2</name>
    <name type="synonym">CHX02</name>
    <name type="ordered locus">At1g79400</name>
    <name type="ORF">T8K14.18</name>
</gene>
<protein>
    <recommendedName>
        <fullName>Cation/H(+) antiporter 2</fullName>
    </recommendedName>
    <alternativeName>
        <fullName>Protein CATION/H+ EXCHANGER 2</fullName>
        <shortName>AtCHX2</shortName>
    </alternativeName>
</protein>
<name>CHX2_ARATH</name>
<proteinExistence type="evidence at transcript level"/>
<feature type="chain" id="PRO_0000394972" description="Cation/H(+) antiporter 2">
    <location>
        <begin position="1"/>
        <end position="783"/>
    </location>
</feature>
<feature type="transmembrane region" description="Helical" evidence="2">
    <location>
        <begin position="19"/>
        <end position="39"/>
    </location>
</feature>
<feature type="transmembrane region" description="Helical" evidence="2">
    <location>
        <begin position="43"/>
        <end position="63"/>
    </location>
</feature>
<feature type="transmembrane region" description="Helical" evidence="2">
    <location>
        <begin position="81"/>
        <end position="101"/>
    </location>
</feature>
<feature type="transmembrane region" description="Helical" evidence="2">
    <location>
        <begin position="121"/>
        <end position="141"/>
    </location>
</feature>
<feature type="transmembrane region" description="Helical" evidence="2">
    <location>
        <begin position="145"/>
        <end position="165"/>
    </location>
</feature>
<feature type="transmembrane region" description="Helical" evidence="2">
    <location>
        <begin position="186"/>
        <end position="206"/>
    </location>
</feature>
<feature type="transmembrane region" description="Helical" evidence="2">
    <location>
        <begin position="208"/>
        <end position="228"/>
    </location>
</feature>
<feature type="transmembrane region" description="Helical" evidence="2">
    <location>
        <begin position="242"/>
        <end position="262"/>
    </location>
</feature>
<feature type="transmembrane region" description="Helical" evidence="2">
    <location>
        <begin position="300"/>
        <end position="320"/>
    </location>
</feature>
<feature type="transmembrane region" description="Helical" evidence="2">
    <location>
        <begin position="323"/>
        <end position="343"/>
    </location>
</feature>
<feature type="transmembrane region" description="Helical" evidence="2">
    <location>
        <begin position="355"/>
        <end position="375"/>
    </location>
</feature>
<feature type="transmembrane region" description="Helical" evidence="2">
    <location>
        <begin position="391"/>
        <end position="411"/>
    </location>
</feature>
<organism>
    <name type="scientific">Arabidopsis thaliana</name>
    <name type="common">Mouse-ear cress</name>
    <dbReference type="NCBI Taxonomy" id="3702"/>
    <lineage>
        <taxon>Eukaryota</taxon>
        <taxon>Viridiplantae</taxon>
        <taxon>Streptophyta</taxon>
        <taxon>Embryophyta</taxon>
        <taxon>Tracheophyta</taxon>
        <taxon>Spermatophyta</taxon>
        <taxon>Magnoliopsida</taxon>
        <taxon>eudicotyledons</taxon>
        <taxon>Gunneridae</taxon>
        <taxon>Pentapetalae</taxon>
        <taxon>rosids</taxon>
        <taxon>malvids</taxon>
        <taxon>Brassicales</taxon>
        <taxon>Brassicaceae</taxon>
        <taxon>Camelineae</taxon>
        <taxon>Arabidopsis</taxon>
    </lineage>
</organism>
<accession>Q9SAK8</accession>
<sequence>MDPKLLLCLPQGDELFNPLNTMFIQMACILVFSQLFYLLLKPCGQAGPVAQILAGIVLSPVLLSRIPKVKEFFLQKNAADYYSFFSFALRTSFMFLIGLEVDLHFMRRNFKKAAVITLSSFVVSGLLSFASLMLFIPLFGIKEDYFTFFLVLLVTLSNTASPVVVRSIADWKLNTCEIGRLTISCALFIELTNVVLYTIIMAFISGTIILELFLFLLATVALILINMVLAPWLPKRNPKEKYLSKAETLVFFIFLLIIGITIESYDVNSSVSVFAIGIMFPRQGKTHRTLIQRLSYPIHEFVLPVYFGYIGFRFSIIALTKRFYLGIVIIVIVTIAGKFIGVISACMYLKIPKKYWLFLPTILSVKGHVGLLLLDSNYSEKKWWTTTIHDMMVAALVITTLVSGVLASFLLKTREKDFAYEKTSLESHNTNEELRILSCAYGVRHARGAISLVSALSGSRGASDPFTPLLMHLVPLPKKRKSELMYHEHDEDGGNANGDDEFGTNEGLEINDSIDSFAKDSKILIQQVKLVTQMLNMHEEICNATEDLRVSIVFLPFHKHQRIDGKTTNDGELFRQMNRNVLRHGPCSIGIFVDRNITGFQQPHGFDSVQHVATLFFGGPDDREALALCRWLANNTLIHLTVIQFVSEESKAETPVGNAMTRDNNEVFMEVLGRNQTEQETDRSFLEEFYNRFVTTGQVGFIEKLVSNGPHTLTILREIGEMYSLFVVGKSTGDCPMTVRMKDWEECPELGTVGDFLASSLDVNASVLVVQRQRHSHDSFIDD</sequence>
<reference key="1">
    <citation type="journal article" date="2000" name="Nature">
        <title>Sequence and analysis of chromosome 1 of the plant Arabidopsis thaliana.</title>
        <authorList>
            <person name="Theologis A."/>
            <person name="Ecker J.R."/>
            <person name="Palm C.J."/>
            <person name="Federspiel N.A."/>
            <person name="Kaul S."/>
            <person name="White O."/>
            <person name="Alonso J."/>
            <person name="Altafi H."/>
            <person name="Araujo R."/>
            <person name="Bowman C.L."/>
            <person name="Brooks S.Y."/>
            <person name="Buehler E."/>
            <person name="Chan A."/>
            <person name="Chao Q."/>
            <person name="Chen H."/>
            <person name="Cheuk R.F."/>
            <person name="Chin C.W."/>
            <person name="Chung M.K."/>
            <person name="Conn L."/>
            <person name="Conway A.B."/>
            <person name="Conway A.R."/>
            <person name="Creasy T.H."/>
            <person name="Dewar K."/>
            <person name="Dunn P."/>
            <person name="Etgu P."/>
            <person name="Feldblyum T.V."/>
            <person name="Feng J.-D."/>
            <person name="Fong B."/>
            <person name="Fujii C.Y."/>
            <person name="Gill J.E."/>
            <person name="Goldsmith A.D."/>
            <person name="Haas B."/>
            <person name="Hansen N.F."/>
            <person name="Hughes B."/>
            <person name="Huizar L."/>
            <person name="Hunter J.L."/>
            <person name="Jenkins J."/>
            <person name="Johnson-Hopson C."/>
            <person name="Khan S."/>
            <person name="Khaykin E."/>
            <person name="Kim C.J."/>
            <person name="Koo H.L."/>
            <person name="Kremenetskaia I."/>
            <person name="Kurtz D.B."/>
            <person name="Kwan A."/>
            <person name="Lam B."/>
            <person name="Langin-Hooper S."/>
            <person name="Lee A."/>
            <person name="Lee J.M."/>
            <person name="Lenz C.A."/>
            <person name="Li J.H."/>
            <person name="Li Y.-P."/>
            <person name="Lin X."/>
            <person name="Liu S.X."/>
            <person name="Liu Z.A."/>
            <person name="Luros J.S."/>
            <person name="Maiti R."/>
            <person name="Marziali A."/>
            <person name="Militscher J."/>
            <person name="Miranda M."/>
            <person name="Nguyen M."/>
            <person name="Nierman W.C."/>
            <person name="Osborne B.I."/>
            <person name="Pai G."/>
            <person name="Peterson J."/>
            <person name="Pham P.K."/>
            <person name="Rizzo M."/>
            <person name="Rooney T."/>
            <person name="Rowley D."/>
            <person name="Sakano H."/>
            <person name="Salzberg S.L."/>
            <person name="Schwartz J.R."/>
            <person name="Shinn P."/>
            <person name="Southwick A.M."/>
            <person name="Sun H."/>
            <person name="Tallon L.J."/>
            <person name="Tambunga G."/>
            <person name="Toriumi M.J."/>
            <person name="Town C.D."/>
            <person name="Utterback T."/>
            <person name="Van Aken S."/>
            <person name="Vaysberg M."/>
            <person name="Vysotskaia V.S."/>
            <person name="Walker M."/>
            <person name="Wu D."/>
            <person name="Yu G."/>
            <person name="Fraser C.M."/>
            <person name="Venter J.C."/>
            <person name="Davis R.W."/>
        </authorList>
    </citation>
    <scope>NUCLEOTIDE SEQUENCE [LARGE SCALE GENOMIC DNA]</scope>
    <source>
        <strain>cv. Columbia</strain>
    </source>
</reference>
<reference key="2">
    <citation type="journal article" date="2017" name="Plant J.">
        <title>Araport11: a complete reannotation of the Arabidopsis thaliana reference genome.</title>
        <authorList>
            <person name="Cheng C.Y."/>
            <person name="Krishnakumar V."/>
            <person name="Chan A.P."/>
            <person name="Thibaud-Nissen F."/>
            <person name="Schobel S."/>
            <person name="Town C.D."/>
        </authorList>
    </citation>
    <scope>GENOME REANNOTATION</scope>
    <source>
        <strain>cv. Columbia</strain>
    </source>
</reference>
<reference key="3">
    <citation type="journal article" date="2001" name="Plant Physiol.">
        <title>Phylogenetic relationships within cation transporter families of Arabidopsis.</title>
        <authorList>
            <person name="Maeser P."/>
            <person name="Thomine S."/>
            <person name="Schroeder J.I."/>
            <person name="Ward J.M."/>
            <person name="Hirschi K."/>
            <person name="Sze H."/>
            <person name="Talke I.N."/>
            <person name="Amtmann A."/>
            <person name="Maathuis F.J.M."/>
            <person name="Sanders D."/>
            <person name="Harper J.F."/>
            <person name="Tchieu J."/>
            <person name="Gribskov M."/>
            <person name="Persans M.W."/>
            <person name="Salt D.E."/>
            <person name="Kim S.A."/>
            <person name="Guerinot M.L."/>
        </authorList>
    </citation>
    <scope>GENE FAMILY</scope>
    <scope>NOMENCLATURE</scope>
</reference>
<reference key="4">
    <citation type="journal article" date="2004" name="Plant Physiol.">
        <title>Expression patterns of a novel AtCHX gene family highlight potential roles in osmotic adjustment and K+ homeostasis in pollen development.</title>
        <authorList>
            <person name="Sze H."/>
            <person name="Padmanaban S."/>
            <person name="Cellier F."/>
            <person name="Honys D."/>
            <person name="Cheng N.-H."/>
            <person name="Bock K.W."/>
            <person name="Conejero G."/>
            <person name="Li X."/>
            <person name="Twell D."/>
            <person name="Ward J.M."/>
            <person name="Hirschi K.D."/>
        </authorList>
    </citation>
    <scope>TISSUE SPECIFICITY</scope>
    <scope>GENE FAMILY</scope>
    <scope>NOMENCLATURE</scope>
</reference>
<keyword id="KW-0050">Antiport</keyword>
<keyword id="KW-0406">Ion transport</keyword>
<keyword id="KW-0472">Membrane</keyword>
<keyword id="KW-0630">Potassium</keyword>
<keyword id="KW-0633">Potassium transport</keyword>
<keyword id="KW-1185">Reference proteome</keyword>
<keyword id="KW-0812">Transmembrane</keyword>
<keyword id="KW-1133">Transmembrane helix</keyword>
<keyword id="KW-0813">Transport</keyword>
<comment type="function">
    <text evidence="1">May operate as a cation/H(+) antiporter.</text>
</comment>
<comment type="subcellular location">
    <subcellularLocation>
        <location evidence="1">Membrane</location>
        <topology evidence="1">Multi-pass membrane protein</topology>
    </subcellularLocation>
</comment>
<comment type="tissue specificity">
    <text evidence="3">Specifically expressed in pollen.</text>
</comment>
<comment type="similarity">
    <text evidence="4">Belongs to the monovalent cation:proton antiporter 2 (CPA2) transporter (TC 2.A.37) family. CHX (TC 2.A.37.4) subfamily.</text>
</comment>